<organism>
    <name type="scientific">Xylella fastidiosa (strain Temecula1 / ATCC 700964)</name>
    <dbReference type="NCBI Taxonomy" id="183190"/>
    <lineage>
        <taxon>Bacteria</taxon>
        <taxon>Pseudomonadati</taxon>
        <taxon>Pseudomonadota</taxon>
        <taxon>Gammaproteobacteria</taxon>
        <taxon>Lysobacterales</taxon>
        <taxon>Lysobacteraceae</taxon>
        <taxon>Xylella</taxon>
    </lineage>
</organism>
<protein>
    <recommendedName>
        <fullName evidence="1">Carbamoyl phosphate synthase large chain</fullName>
        <ecNumber evidence="1">6.3.4.16</ecNumber>
        <ecNumber evidence="1">6.3.5.5</ecNumber>
    </recommendedName>
    <alternativeName>
        <fullName evidence="1">Carbamoyl phosphate synthetase ammonia chain</fullName>
    </alternativeName>
</protein>
<sequence length="1080" mass="117355">MPKRTDLRTILIIGAGPIVIGQACEFDYSGAQACKALRAEGFRVVLVNSNPATIMTDPDMADAVYIEPIHWRTVEKIITKEKPDALLPTMGGQTALNCALDLADHGVLEKYGVELIGAKREAIRMAEDRELFRVAMQEIGLECPKAEVAKSLERALEIQAKVGFPTIIRPSFTLGGTGGGIAYNRQEFEEIIKRGLELSPVHEVLVEESVLGWKEFEMEVVRDASDNCIIVCSIENLDPMGVHTGDSITVAPAQTLSDKEYQRLRDASIAVLRKIGVDTGGSNVQFGIDPQTGRVVVIEMNPRVSRSSALASKATGFPIAKIAAKLAVGYTLDELKNEITGGKTPASFEPSIDYVVTKIPRFAFEKFPQADARLTTQMKSVGEVMAMGRTFAESLQKAVRGLETGKVGLEPTGLDLSSEDDLVVLKRELKAPGAERLFYVADAFRAGFAVADVYALSYIDPWFLDQIEEIVAAEGRLVTDGLGSIDGARLRQLKRIGFSDARIAQLTGTNEVAVRTLRRVLKVKPVYKRVDSCAGEFATGTAYLYSTYEEECEAAPSDRRKIMILGGGPNRIGQGIEFDYCCVHAALALREDGFETIMVNCNPETVSTDYDTSDRLYFEPLTLEDVLEIVEVEHPVGVIVQYGGQTPLKLAKALEANGVPVIGTSPESIDLAEDRERFQRLVQQLGLRQPPNCTARTADEALVLAREIGYPLVVRPSYVLGGRAMEIVYSEADLARYVRDAVKVSNDSPVLLDRFLDNAVEVDVDIIADPEGQVLIGGVMEHIEEAGVHSGDSSCSLPPYSLSAATQDDLRRQVIRLAQALNVIGLMNTQFAIQSNDDGSDIVYLLEVNPRASRTVPFVSKATGVPLAKIAARCMTGKTLAEQSVTCEVVPAYYAVKEAIFPFAKLQGVDPILGPEMRSTGEVMGVGRSFAAAFARAQEAGDIRAPQPGRAFVSVRDPDKKRVLPVVLALVERGFGVVATAGTYAWLQQNGVACEVVNKVAEGRPHIVDLIKNGEIVYIINTTEGRAAIADSFSIRREALQHCVTYSTTIAGAKALVNSLEFRGTGPVWSLQELHKELQV</sequence>
<dbReference type="EC" id="6.3.4.16" evidence="1"/>
<dbReference type="EC" id="6.3.5.5" evidence="1"/>
<dbReference type="EMBL" id="AE009442">
    <property type="protein sequence ID" value="AAO28279.1"/>
    <property type="molecule type" value="Genomic_DNA"/>
</dbReference>
<dbReference type="RefSeq" id="WP_004085673.1">
    <property type="nucleotide sequence ID" value="NC_004556.1"/>
</dbReference>
<dbReference type="SMR" id="Q87EB8"/>
<dbReference type="GeneID" id="93904100"/>
<dbReference type="KEGG" id="xft:PD_0399"/>
<dbReference type="HOGENOM" id="CLU_000513_1_2_6"/>
<dbReference type="UniPathway" id="UPA00068">
    <property type="reaction ID" value="UER00171"/>
</dbReference>
<dbReference type="UniPathway" id="UPA00070">
    <property type="reaction ID" value="UER00115"/>
</dbReference>
<dbReference type="Proteomes" id="UP000002516">
    <property type="component" value="Chromosome"/>
</dbReference>
<dbReference type="GO" id="GO:0005737">
    <property type="term" value="C:cytoplasm"/>
    <property type="evidence" value="ECO:0007669"/>
    <property type="project" value="TreeGrafter"/>
</dbReference>
<dbReference type="GO" id="GO:0005524">
    <property type="term" value="F:ATP binding"/>
    <property type="evidence" value="ECO:0007669"/>
    <property type="project" value="UniProtKB-UniRule"/>
</dbReference>
<dbReference type="GO" id="GO:0004087">
    <property type="term" value="F:carbamoyl-phosphate synthase (ammonia) activity"/>
    <property type="evidence" value="ECO:0007669"/>
    <property type="project" value="RHEA"/>
</dbReference>
<dbReference type="GO" id="GO:0004088">
    <property type="term" value="F:carbamoyl-phosphate synthase (glutamine-hydrolyzing) activity"/>
    <property type="evidence" value="ECO:0007669"/>
    <property type="project" value="UniProtKB-UniRule"/>
</dbReference>
<dbReference type="GO" id="GO:0046872">
    <property type="term" value="F:metal ion binding"/>
    <property type="evidence" value="ECO:0007669"/>
    <property type="project" value="UniProtKB-KW"/>
</dbReference>
<dbReference type="GO" id="GO:0044205">
    <property type="term" value="P:'de novo' UMP biosynthetic process"/>
    <property type="evidence" value="ECO:0007669"/>
    <property type="project" value="UniProtKB-UniRule"/>
</dbReference>
<dbReference type="GO" id="GO:0006541">
    <property type="term" value="P:glutamine metabolic process"/>
    <property type="evidence" value="ECO:0007669"/>
    <property type="project" value="TreeGrafter"/>
</dbReference>
<dbReference type="GO" id="GO:0006526">
    <property type="term" value="P:L-arginine biosynthetic process"/>
    <property type="evidence" value="ECO:0007669"/>
    <property type="project" value="UniProtKB-UniRule"/>
</dbReference>
<dbReference type="CDD" id="cd01424">
    <property type="entry name" value="MGS_CPS_II"/>
    <property type="match status" value="1"/>
</dbReference>
<dbReference type="FunFam" id="1.10.1030.10:FF:000002">
    <property type="entry name" value="Carbamoyl-phosphate synthase large chain"/>
    <property type="match status" value="1"/>
</dbReference>
<dbReference type="FunFam" id="3.30.1490.20:FF:000001">
    <property type="entry name" value="Carbamoyl-phosphate synthase large chain"/>
    <property type="match status" value="1"/>
</dbReference>
<dbReference type="FunFam" id="3.30.470.20:FF:000007">
    <property type="entry name" value="Carbamoyl-phosphate synthase large chain"/>
    <property type="match status" value="1"/>
</dbReference>
<dbReference type="FunFam" id="3.30.470.20:FF:000013">
    <property type="entry name" value="Carbamoyl-phosphate synthase large chain"/>
    <property type="match status" value="1"/>
</dbReference>
<dbReference type="FunFam" id="3.40.50.20:FF:000001">
    <property type="entry name" value="Carbamoyl-phosphate synthase large chain"/>
    <property type="match status" value="1"/>
</dbReference>
<dbReference type="FunFam" id="3.40.50.20:FF:000003">
    <property type="entry name" value="Carbamoyl-phosphate synthase large chain"/>
    <property type="match status" value="1"/>
</dbReference>
<dbReference type="Gene3D" id="3.40.50.20">
    <property type="match status" value="2"/>
</dbReference>
<dbReference type="Gene3D" id="3.30.470.20">
    <property type="entry name" value="ATP-grasp fold, B domain"/>
    <property type="match status" value="2"/>
</dbReference>
<dbReference type="Gene3D" id="1.10.1030.10">
    <property type="entry name" value="Carbamoyl-phosphate synthetase, large subunit oligomerisation domain"/>
    <property type="match status" value="1"/>
</dbReference>
<dbReference type="Gene3D" id="3.40.50.1380">
    <property type="entry name" value="Methylglyoxal synthase-like domain"/>
    <property type="match status" value="1"/>
</dbReference>
<dbReference type="HAMAP" id="MF_01210_A">
    <property type="entry name" value="CPSase_L_chain_A"/>
    <property type="match status" value="1"/>
</dbReference>
<dbReference type="HAMAP" id="MF_01210_B">
    <property type="entry name" value="CPSase_L_chain_B"/>
    <property type="match status" value="1"/>
</dbReference>
<dbReference type="InterPro" id="IPR011761">
    <property type="entry name" value="ATP-grasp"/>
</dbReference>
<dbReference type="InterPro" id="IPR006275">
    <property type="entry name" value="CarbamoylP_synth_lsu"/>
</dbReference>
<dbReference type="InterPro" id="IPR005480">
    <property type="entry name" value="CarbamoylP_synth_lsu_oligo"/>
</dbReference>
<dbReference type="InterPro" id="IPR036897">
    <property type="entry name" value="CarbamoylP_synth_lsu_oligo_sf"/>
</dbReference>
<dbReference type="InterPro" id="IPR005479">
    <property type="entry name" value="CbamoylP_synth_lsu-like_ATP-bd"/>
</dbReference>
<dbReference type="InterPro" id="IPR005483">
    <property type="entry name" value="CbamoylP_synth_lsu_CPSase_dom"/>
</dbReference>
<dbReference type="InterPro" id="IPR011607">
    <property type="entry name" value="MGS-like_dom"/>
</dbReference>
<dbReference type="InterPro" id="IPR036914">
    <property type="entry name" value="MGS-like_dom_sf"/>
</dbReference>
<dbReference type="InterPro" id="IPR033937">
    <property type="entry name" value="MGS_CPS_CarB"/>
</dbReference>
<dbReference type="InterPro" id="IPR016185">
    <property type="entry name" value="PreATP-grasp_dom_sf"/>
</dbReference>
<dbReference type="NCBIfam" id="TIGR01369">
    <property type="entry name" value="CPSaseII_lrg"/>
    <property type="match status" value="1"/>
</dbReference>
<dbReference type="NCBIfam" id="NF003671">
    <property type="entry name" value="PRK05294.1"/>
    <property type="match status" value="1"/>
</dbReference>
<dbReference type="NCBIfam" id="NF009455">
    <property type="entry name" value="PRK12815.1"/>
    <property type="match status" value="1"/>
</dbReference>
<dbReference type="PANTHER" id="PTHR11405:SF53">
    <property type="entry name" value="CARBAMOYL-PHOSPHATE SYNTHASE [AMMONIA], MITOCHONDRIAL"/>
    <property type="match status" value="1"/>
</dbReference>
<dbReference type="PANTHER" id="PTHR11405">
    <property type="entry name" value="CARBAMOYLTRANSFERASE FAMILY MEMBER"/>
    <property type="match status" value="1"/>
</dbReference>
<dbReference type="Pfam" id="PF02786">
    <property type="entry name" value="CPSase_L_D2"/>
    <property type="match status" value="2"/>
</dbReference>
<dbReference type="Pfam" id="PF02787">
    <property type="entry name" value="CPSase_L_D3"/>
    <property type="match status" value="1"/>
</dbReference>
<dbReference type="Pfam" id="PF02142">
    <property type="entry name" value="MGS"/>
    <property type="match status" value="1"/>
</dbReference>
<dbReference type="PRINTS" id="PR00098">
    <property type="entry name" value="CPSASE"/>
</dbReference>
<dbReference type="SMART" id="SM01096">
    <property type="entry name" value="CPSase_L_D3"/>
    <property type="match status" value="1"/>
</dbReference>
<dbReference type="SMART" id="SM00851">
    <property type="entry name" value="MGS"/>
    <property type="match status" value="1"/>
</dbReference>
<dbReference type="SUPFAM" id="SSF48108">
    <property type="entry name" value="Carbamoyl phosphate synthetase, large subunit connection domain"/>
    <property type="match status" value="1"/>
</dbReference>
<dbReference type="SUPFAM" id="SSF56059">
    <property type="entry name" value="Glutathione synthetase ATP-binding domain-like"/>
    <property type="match status" value="2"/>
</dbReference>
<dbReference type="SUPFAM" id="SSF52335">
    <property type="entry name" value="Methylglyoxal synthase-like"/>
    <property type="match status" value="1"/>
</dbReference>
<dbReference type="SUPFAM" id="SSF52440">
    <property type="entry name" value="PreATP-grasp domain"/>
    <property type="match status" value="2"/>
</dbReference>
<dbReference type="PROSITE" id="PS50975">
    <property type="entry name" value="ATP_GRASP"/>
    <property type="match status" value="2"/>
</dbReference>
<dbReference type="PROSITE" id="PS00866">
    <property type="entry name" value="CPSASE_1"/>
    <property type="match status" value="1"/>
</dbReference>
<dbReference type="PROSITE" id="PS00867">
    <property type="entry name" value="CPSASE_2"/>
    <property type="match status" value="2"/>
</dbReference>
<dbReference type="PROSITE" id="PS51855">
    <property type="entry name" value="MGS"/>
    <property type="match status" value="1"/>
</dbReference>
<proteinExistence type="inferred from homology"/>
<comment type="function">
    <text evidence="1">Large subunit of the glutamine-dependent carbamoyl phosphate synthetase (CPSase). CPSase catalyzes the formation of carbamoyl phosphate from the ammonia moiety of glutamine, carbonate, and phosphate donated by ATP, constituting the first step of 2 biosynthetic pathways, one leading to arginine and/or urea and the other to pyrimidine nucleotides. The large subunit (synthetase) binds the substrates ammonia (free or transferred from glutamine from the small subunit), hydrogencarbonate and ATP and carries out an ATP-coupled ligase reaction, activating hydrogencarbonate by forming carboxy phosphate which reacts with ammonia to form carbamoyl phosphate.</text>
</comment>
<comment type="catalytic activity">
    <reaction evidence="1">
        <text>hydrogencarbonate + L-glutamine + 2 ATP + H2O = carbamoyl phosphate + L-glutamate + 2 ADP + phosphate + 2 H(+)</text>
        <dbReference type="Rhea" id="RHEA:18633"/>
        <dbReference type="ChEBI" id="CHEBI:15377"/>
        <dbReference type="ChEBI" id="CHEBI:15378"/>
        <dbReference type="ChEBI" id="CHEBI:17544"/>
        <dbReference type="ChEBI" id="CHEBI:29985"/>
        <dbReference type="ChEBI" id="CHEBI:30616"/>
        <dbReference type="ChEBI" id="CHEBI:43474"/>
        <dbReference type="ChEBI" id="CHEBI:58228"/>
        <dbReference type="ChEBI" id="CHEBI:58359"/>
        <dbReference type="ChEBI" id="CHEBI:456216"/>
        <dbReference type="EC" id="6.3.5.5"/>
    </reaction>
</comment>
<comment type="catalytic activity">
    <molecule>Carbamoyl phosphate synthase large chain</molecule>
    <reaction evidence="1">
        <text>hydrogencarbonate + NH4(+) + 2 ATP = carbamoyl phosphate + 2 ADP + phosphate + 2 H(+)</text>
        <dbReference type="Rhea" id="RHEA:18029"/>
        <dbReference type="ChEBI" id="CHEBI:15378"/>
        <dbReference type="ChEBI" id="CHEBI:17544"/>
        <dbReference type="ChEBI" id="CHEBI:28938"/>
        <dbReference type="ChEBI" id="CHEBI:30616"/>
        <dbReference type="ChEBI" id="CHEBI:43474"/>
        <dbReference type="ChEBI" id="CHEBI:58228"/>
        <dbReference type="ChEBI" id="CHEBI:456216"/>
        <dbReference type="EC" id="6.3.4.16"/>
    </reaction>
</comment>
<comment type="cofactor">
    <cofactor evidence="1">
        <name>Mg(2+)</name>
        <dbReference type="ChEBI" id="CHEBI:18420"/>
    </cofactor>
    <cofactor evidence="1">
        <name>Mn(2+)</name>
        <dbReference type="ChEBI" id="CHEBI:29035"/>
    </cofactor>
    <text evidence="1">Binds 4 Mg(2+) or Mn(2+) ions per subunit.</text>
</comment>
<comment type="pathway">
    <text evidence="1">Amino-acid biosynthesis; L-arginine biosynthesis; carbamoyl phosphate from bicarbonate: step 1/1.</text>
</comment>
<comment type="pathway">
    <text evidence="1">Pyrimidine metabolism; UMP biosynthesis via de novo pathway; (S)-dihydroorotate from bicarbonate: step 1/3.</text>
</comment>
<comment type="subunit">
    <text evidence="1">Composed of two chains; the small (or glutamine) chain promotes the hydrolysis of glutamine to ammonia, which is used by the large (or ammonia) chain to synthesize carbamoyl phosphate. Tetramer of heterodimers (alpha,beta)4.</text>
</comment>
<comment type="domain">
    <text evidence="1">The large subunit is composed of 2 ATP-grasp domains that are involved in binding the 2 ATP molecules needed for carbamoyl phosphate synthesis. The N-terminal ATP-grasp domain (referred to as the carboxyphosphate synthetic component) catalyzes the ATP-dependent phosphorylation of hydrogencarbonate to carboxyphosphate and the subsequent nucleophilic attack by ammonia to form a carbamate intermediate. The C-terminal ATP-grasp domain (referred to as the carbamoyl phosphate synthetic component) then catalyzes the phosphorylation of carbamate with the second ATP to form the end product carbamoyl phosphate. The reactive and unstable enzyme intermediates are sequentially channeled from one active site to the next through the interior of the protein over a distance of at least 96 A.</text>
</comment>
<comment type="similarity">
    <text evidence="1">Belongs to the CarB family.</text>
</comment>
<gene>
    <name evidence="1" type="primary">carB</name>
    <name type="ordered locus">PD_0399</name>
</gene>
<feature type="chain" id="PRO_0000145068" description="Carbamoyl phosphate synthase large chain">
    <location>
        <begin position="1"/>
        <end position="1080"/>
    </location>
</feature>
<feature type="domain" description="ATP-grasp 1" evidence="1">
    <location>
        <begin position="133"/>
        <end position="328"/>
    </location>
</feature>
<feature type="domain" description="ATP-grasp 2" evidence="1">
    <location>
        <begin position="679"/>
        <end position="876"/>
    </location>
</feature>
<feature type="domain" description="MGS-like" evidence="1">
    <location>
        <begin position="943"/>
        <end position="1080"/>
    </location>
</feature>
<feature type="region of interest" description="Carboxyphosphate synthetic domain" evidence="1">
    <location>
        <begin position="1"/>
        <end position="403"/>
    </location>
</feature>
<feature type="region of interest" description="Oligomerization domain" evidence="1">
    <location>
        <begin position="404"/>
        <end position="554"/>
    </location>
</feature>
<feature type="region of interest" description="Carbamoyl phosphate synthetic domain" evidence="1">
    <location>
        <begin position="555"/>
        <end position="942"/>
    </location>
</feature>
<feature type="region of interest" description="Allosteric domain" evidence="1">
    <location>
        <begin position="943"/>
        <end position="1080"/>
    </location>
</feature>
<feature type="binding site" evidence="1">
    <location>
        <position position="129"/>
    </location>
    <ligand>
        <name>ATP</name>
        <dbReference type="ChEBI" id="CHEBI:30616"/>
        <label>1</label>
    </ligand>
</feature>
<feature type="binding site" evidence="1">
    <location>
        <position position="169"/>
    </location>
    <ligand>
        <name>ATP</name>
        <dbReference type="ChEBI" id="CHEBI:30616"/>
        <label>1</label>
    </ligand>
</feature>
<feature type="binding site" evidence="1">
    <location>
        <position position="175"/>
    </location>
    <ligand>
        <name>ATP</name>
        <dbReference type="ChEBI" id="CHEBI:30616"/>
        <label>1</label>
    </ligand>
</feature>
<feature type="binding site" evidence="1">
    <location>
        <position position="176"/>
    </location>
    <ligand>
        <name>ATP</name>
        <dbReference type="ChEBI" id="CHEBI:30616"/>
        <label>1</label>
    </ligand>
</feature>
<feature type="binding site" evidence="1">
    <location>
        <position position="208"/>
    </location>
    <ligand>
        <name>ATP</name>
        <dbReference type="ChEBI" id="CHEBI:30616"/>
        <label>1</label>
    </ligand>
</feature>
<feature type="binding site" evidence="1">
    <location>
        <position position="210"/>
    </location>
    <ligand>
        <name>ATP</name>
        <dbReference type="ChEBI" id="CHEBI:30616"/>
        <label>1</label>
    </ligand>
</feature>
<feature type="binding site" evidence="1">
    <location>
        <position position="215"/>
    </location>
    <ligand>
        <name>ATP</name>
        <dbReference type="ChEBI" id="CHEBI:30616"/>
        <label>1</label>
    </ligand>
</feature>
<feature type="binding site" evidence="1">
    <location>
        <position position="241"/>
    </location>
    <ligand>
        <name>ATP</name>
        <dbReference type="ChEBI" id="CHEBI:30616"/>
        <label>1</label>
    </ligand>
</feature>
<feature type="binding site" evidence="1">
    <location>
        <position position="242"/>
    </location>
    <ligand>
        <name>ATP</name>
        <dbReference type="ChEBI" id="CHEBI:30616"/>
        <label>1</label>
    </ligand>
</feature>
<feature type="binding site" evidence="1">
    <location>
        <position position="243"/>
    </location>
    <ligand>
        <name>ATP</name>
        <dbReference type="ChEBI" id="CHEBI:30616"/>
        <label>1</label>
    </ligand>
</feature>
<feature type="binding site" evidence="1">
    <location>
        <position position="285"/>
    </location>
    <ligand>
        <name>ATP</name>
        <dbReference type="ChEBI" id="CHEBI:30616"/>
        <label>1</label>
    </ligand>
</feature>
<feature type="binding site" evidence="1">
    <location>
        <position position="285"/>
    </location>
    <ligand>
        <name>Mg(2+)</name>
        <dbReference type="ChEBI" id="CHEBI:18420"/>
        <label>1</label>
    </ligand>
</feature>
<feature type="binding site" evidence="1">
    <location>
        <position position="285"/>
    </location>
    <ligand>
        <name>Mn(2+)</name>
        <dbReference type="ChEBI" id="CHEBI:29035"/>
        <label>1</label>
    </ligand>
</feature>
<feature type="binding site" evidence="1">
    <location>
        <position position="299"/>
    </location>
    <ligand>
        <name>ATP</name>
        <dbReference type="ChEBI" id="CHEBI:30616"/>
        <label>1</label>
    </ligand>
</feature>
<feature type="binding site" evidence="1">
    <location>
        <position position="299"/>
    </location>
    <ligand>
        <name>Mg(2+)</name>
        <dbReference type="ChEBI" id="CHEBI:18420"/>
        <label>1</label>
    </ligand>
</feature>
<feature type="binding site" evidence="1">
    <location>
        <position position="299"/>
    </location>
    <ligand>
        <name>Mg(2+)</name>
        <dbReference type="ChEBI" id="CHEBI:18420"/>
        <label>2</label>
    </ligand>
</feature>
<feature type="binding site" evidence="1">
    <location>
        <position position="299"/>
    </location>
    <ligand>
        <name>Mn(2+)</name>
        <dbReference type="ChEBI" id="CHEBI:29035"/>
        <label>1</label>
    </ligand>
</feature>
<feature type="binding site" evidence="1">
    <location>
        <position position="299"/>
    </location>
    <ligand>
        <name>Mn(2+)</name>
        <dbReference type="ChEBI" id="CHEBI:29035"/>
        <label>2</label>
    </ligand>
</feature>
<feature type="binding site" evidence="1">
    <location>
        <position position="301"/>
    </location>
    <ligand>
        <name>Mg(2+)</name>
        <dbReference type="ChEBI" id="CHEBI:18420"/>
        <label>2</label>
    </ligand>
</feature>
<feature type="binding site" evidence="1">
    <location>
        <position position="301"/>
    </location>
    <ligand>
        <name>Mn(2+)</name>
        <dbReference type="ChEBI" id="CHEBI:29035"/>
        <label>2</label>
    </ligand>
</feature>
<feature type="binding site" evidence="1">
    <location>
        <position position="715"/>
    </location>
    <ligand>
        <name>ATP</name>
        <dbReference type="ChEBI" id="CHEBI:30616"/>
        <label>2</label>
    </ligand>
</feature>
<feature type="binding site" evidence="1">
    <location>
        <position position="754"/>
    </location>
    <ligand>
        <name>ATP</name>
        <dbReference type="ChEBI" id="CHEBI:30616"/>
        <label>2</label>
    </ligand>
</feature>
<feature type="binding site" evidence="1">
    <location>
        <position position="756"/>
    </location>
    <ligand>
        <name>ATP</name>
        <dbReference type="ChEBI" id="CHEBI:30616"/>
        <label>2</label>
    </ligand>
</feature>
<feature type="binding site" evidence="1">
    <location>
        <position position="761"/>
    </location>
    <ligand>
        <name>ATP</name>
        <dbReference type="ChEBI" id="CHEBI:30616"/>
        <label>2</label>
    </ligand>
</feature>
<feature type="binding site" evidence="1">
    <location>
        <position position="787"/>
    </location>
    <ligand>
        <name>ATP</name>
        <dbReference type="ChEBI" id="CHEBI:30616"/>
        <label>2</label>
    </ligand>
</feature>
<feature type="binding site" evidence="1">
    <location>
        <position position="788"/>
    </location>
    <ligand>
        <name>ATP</name>
        <dbReference type="ChEBI" id="CHEBI:30616"/>
        <label>2</label>
    </ligand>
</feature>
<feature type="binding site" evidence="1">
    <location>
        <position position="789"/>
    </location>
    <ligand>
        <name>ATP</name>
        <dbReference type="ChEBI" id="CHEBI:30616"/>
        <label>2</label>
    </ligand>
</feature>
<feature type="binding site" evidence="1">
    <location>
        <position position="790"/>
    </location>
    <ligand>
        <name>ATP</name>
        <dbReference type="ChEBI" id="CHEBI:30616"/>
        <label>2</label>
    </ligand>
</feature>
<feature type="binding site" evidence="1">
    <location>
        <position position="830"/>
    </location>
    <ligand>
        <name>ATP</name>
        <dbReference type="ChEBI" id="CHEBI:30616"/>
        <label>2</label>
    </ligand>
</feature>
<feature type="binding site" evidence="1">
    <location>
        <position position="830"/>
    </location>
    <ligand>
        <name>Mg(2+)</name>
        <dbReference type="ChEBI" id="CHEBI:18420"/>
        <label>3</label>
    </ligand>
</feature>
<feature type="binding site" evidence="1">
    <location>
        <position position="830"/>
    </location>
    <ligand>
        <name>Mn(2+)</name>
        <dbReference type="ChEBI" id="CHEBI:29035"/>
        <label>3</label>
    </ligand>
</feature>
<feature type="binding site" evidence="1">
    <location>
        <position position="847"/>
    </location>
    <ligand>
        <name>ATP</name>
        <dbReference type="ChEBI" id="CHEBI:30616"/>
        <label>2</label>
    </ligand>
</feature>
<feature type="binding site" evidence="1">
    <location>
        <position position="847"/>
    </location>
    <ligand>
        <name>Mg(2+)</name>
        <dbReference type="ChEBI" id="CHEBI:18420"/>
        <label>3</label>
    </ligand>
</feature>
<feature type="binding site" evidence="1">
    <location>
        <position position="847"/>
    </location>
    <ligand>
        <name>Mg(2+)</name>
        <dbReference type="ChEBI" id="CHEBI:18420"/>
        <label>4</label>
    </ligand>
</feature>
<feature type="binding site" evidence="1">
    <location>
        <position position="847"/>
    </location>
    <ligand>
        <name>Mn(2+)</name>
        <dbReference type="ChEBI" id="CHEBI:29035"/>
        <label>3</label>
    </ligand>
</feature>
<feature type="binding site" evidence="1">
    <location>
        <position position="847"/>
    </location>
    <ligand>
        <name>Mn(2+)</name>
        <dbReference type="ChEBI" id="CHEBI:29035"/>
        <label>4</label>
    </ligand>
</feature>
<feature type="binding site" evidence="1">
    <location>
        <position position="849"/>
    </location>
    <ligand>
        <name>Mg(2+)</name>
        <dbReference type="ChEBI" id="CHEBI:18420"/>
        <label>4</label>
    </ligand>
</feature>
<feature type="binding site" evidence="1">
    <location>
        <position position="849"/>
    </location>
    <ligand>
        <name>Mn(2+)</name>
        <dbReference type="ChEBI" id="CHEBI:29035"/>
        <label>4</label>
    </ligand>
</feature>
<name>CARB_XYLFT</name>
<evidence type="ECO:0000255" key="1">
    <source>
        <dbReference type="HAMAP-Rule" id="MF_01210"/>
    </source>
</evidence>
<reference key="1">
    <citation type="journal article" date="2003" name="J. Bacteriol.">
        <title>Comparative analyses of the complete genome sequences of Pierce's disease and citrus variegated chlorosis strains of Xylella fastidiosa.</title>
        <authorList>
            <person name="Van Sluys M.A."/>
            <person name="de Oliveira M.C."/>
            <person name="Monteiro-Vitorello C.B."/>
            <person name="Miyaki C.Y."/>
            <person name="Furlan L.R."/>
            <person name="Camargo L.E.A."/>
            <person name="da Silva A.C.R."/>
            <person name="Moon D.H."/>
            <person name="Takita M.A."/>
            <person name="Lemos E.G.M."/>
            <person name="Machado M.A."/>
            <person name="Ferro M.I.T."/>
            <person name="da Silva F.R."/>
            <person name="Goldman M.H.S."/>
            <person name="Goldman G.H."/>
            <person name="Lemos M.V.F."/>
            <person name="El-Dorry H."/>
            <person name="Tsai S.M."/>
            <person name="Carrer H."/>
            <person name="Carraro D.M."/>
            <person name="de Oliveira R.C."/>
            <person name="Nunes L.R."/>
            <person name="Siqueira W.J."/>
            <person name="Coutinho L.L."/>
            <person name="Kimura E.T."/>
            <person name="Ferro E.S."/>
            <person name="Harakava R."/>
            <person name="Kuramae E.E."/>
            <person name="Marino C.L."/>
            <person name="Giglioti E."/>
            <person name="Abreu I.L."/>
            <person name="Alves L.M.C."/>
            <person name="do Amaral A.M."/>
            <person name="Baia G.S."/>
            <person name="Blanco S.R."/>
            <person name="Brito M.S."/>
            <person name="Cannavan F.S."/>
            <person name="Celestino A.V."/>
            <person name="da Cunha A.F."/>
            <person name="Fenille R.C."/>
            <person name="Ferro J.A."/>
            <person name="Formighieri E.F."/>
            <person name="Kishi L.T."/>
            <person name="Leoni S.G."/>
            <person name="Oliveira A.R."/>
            <person name="Rosa V.E. Jr."/>
            <person name="Sassaki F.T."/>
            <person name="Sena J.A.D."/>
            <person name="de Souza A.A."/>
            <person name="Truffi D."/>
            <person name="Tsukumo F."/>
            <person name="Yanai G.M."/>
            <person name="Zaros L.G."/>
            <person name="Civerolo E.L."/>
            <person name="Simpson A.J.G."/>
            <person name="Almeida N.F. Jr."/>
            <person name="Setubal J.C."/>
            <person name="Kitajima J.P."/>
        </authorList>
    </citation>
    <scope>NUCLEOTIDE SEQUENCE [LARGE SCALE GENOMIC DNA]</scope>
    <source>
        <strain>Temecula1 / ATCC 700964</strain>
    </source>
</reference>
<keyword id="KW-0028">Amino-acid biosynthesis</keyword>
<keyword id="KW-0055">Arginine biosynthesis</keyword>
<keyword id="KW-0067">ATP-binding</keyword>
<keyword id="KW-0436">Ligase</keyword>
<keyword id="KW-0460">Magnesium</keyword>
<keyword id="KW-0464">Manganese</keyword>
<keyword id="KW-0479">Metal-binding</keyword>
<keyword id="KW-0547">Nucleotide-binding</keyword>
<keyword id="KW-0665">Pyrimidine biosynthesis</keyword>
<keyword id="KW-1185">Reference proteome</keyword>
<keyword id="KW-0677">Repeat</keyword>
<accession>Q87EB8</accession>